<feature type="chain" id="PRO_0000380751" description="E3 ubiquitin-protein ligase RNF133">
    <location>
        <begin position="1"/>
        <end position="382"/>
    </location>
</feature>
<feature type="transmembrane region" description="Helical" evidence="1">
    <location>
        <begin position="190"/>
        <end position="210"/>
    </location>
</feature>
<feature type="domain" description="PA">
    <location>
        <begin position="65"/>
        <end position="167"/>
    </location>
</feature>
<feature type="zinc finger region" description="RING-type; atypical" evidence="2">
    <location>
        <begin position="256"/>
        <end position="297"/>
    </location>
</feature>
<feature type="region of interest" description="Disordered" evidence="3">
    <location>
        <begin position="328"/>
        <end position="382"/>
    </location>
</feature>
<feature type="compositionally biased region" description="Polar residues" evidence="3">
    <location>
        <begin position="344"/>
        <end position="364"/>
    </location>
</feature>
<feature type="splice variant" id="VSP_037829" description="In isoform 2." evidence="6">
    <location>
        <begin position="160"/>
        <end position="202"/>
    </location>
</feature>
<feature type="sequence conflict" description="In Ref. 4; AAN75222." evidence="7" ref="4">
    <original>K</original>
    <variation>E</variation>
    <location>
        <position position="182"/>
    </location>
</feature>
<accession>Q14B02</accession>
<accession>Q8C1F1</accession>
<accession>Q8CGR0</accession>
<comment type="function">
    <text evidence="4 5">Has E3 ubiquitin-protein ligase activity (PubMed:18574499). Plays a role in male fecundity through the interaction with the E2 ubituitin-protein ligase UBE2J1 (PubMed:35831855).</text>
</comment>
<comment type="catalytic activity">
    <reaction evidence="4">
        <text>S-ubiquitinyl-[E2 ubiquitin-conjugating enzyme]-L-cysteine + [acceptor protein]-L-lysine = [E2 ubiquitin-conjugating enzyme]-L-cysteine + N(6)-ubiquitinyl-[acceptor protein]-L-lysine.</text>
        <dbReference type="EC" id="2.3.2.27"/>
    </reaction>
</comment>
<comment type="pathway">
    <text evidence="4">Protein modification; protein ubiquitination.</text>
</comment>
<comment type="subunit">
    <text evidence="5">Interacts with E3 ligase UBE2J1.</text>
</comment>
<comment type="subcellular location">
    <subcellularLocation>
        <location evidence="4 5">Endoplasmic reticulum membrane</location>
        <topology evidence="8">Single-pass membrane protein</topology>
    </subcellularLocation>
</comment>
<comment type="alternative products">
    <event type="alternative splicing"/>
    <isoform>
        <id>Q14B02-1</id>
        <name>1</name>
        <sequence type="displayed"/>
    </isoform>
    <isoform>
        <id>Q14B02-2</id>
        <name>2</name>
        <sequence type="described" ref="VSP_037829"/>
    </isoform>
</comment>
<comment type="tissue specificity">
    <text evidence="4 5">Expression is testis-specific.</text>
</comment>
<comment type="developmental stage">
    <text evidence="4 5">Expression begins in the testis at day 21 and increases dramatically from day 28 and thereafter.</text>
</comment>
<comment type="PTM">
    <text evidence="4">Auto-ubiquitinated.</text>
</comment>
<comment type="disruption phenotype">
    <text evidence="5">Male mutants display severe subfertility. Sperm cells show an aberrant head-neck morphology. Female mutants fertility is not affected.</text>
</comment>
<evidence type="ECO:0000255" key="1"/>
<evidence type="ECO:0000255" key="2">
    <source>
        <dbReference type="PROSITE-ProRule" id="PRU00175"/>
    </source>
</evidence>
<evidence type="ECO:0000256" key="3">
    <source>
        <dbReference type="SAM" id="MobiDB-lite"/>
    </source>
</evidence>
<evidence type="ECO:0000269" key="4">
    <source>
    </source>
</evidence>
<evidence type="ECO:0000269" key="5">
    <source>
    </source>
</evidence>
<evidence type="ECO:0000303" key="6">
    <source>
    </source>
</evidence>
<evidence type="ECO:0000305" key="7"/>
<evidence type="ECO:0000305" key="8">
    <source>
    </source>
</evidence>
<gene>
    <name type="primary">Rnf133</name>
    <name type="synonym">Greul2</name>
</gene>
<protein>
    <recommendedName>
        <fullName>E3 ubiquitin-protein ligase RNF133</fullName>
        <ecNumber evidence="4">2.3.2.27</ecNumber>
    </recommendedName>
    <alternativeName>
        <fullName>Goliath-related E3 ubiquitin-protein ligase 2</fullName>
    </alternativeName>
    <alternativeName>
        <fullName>RING finger protein 133</fullName>
    </alternativeName>
    <alternativeName>
        <fullName evidence="7">RING-type E3 ubiquitin transferase RNF133</fullName>
    </alternativeName>
</protein>
<sequence>MNPLQTSTWQNQAPSFWLLRFSFIWLVSQKCCTASAVWTAYMNISFHVGNRMLSELGETGVFGRSSILKRVAGVVVPPEGKIQNACDPNTTFILPRNKEPWIALIERGGCAFTQKIKVASEHGARGVIIYNFPGTGNQVFPMSHQAFEDIVVVMIGNIKGMEILHLIRKGVHVTVMVEVGRKHVIWLNHYFVSFMIVTTATLAYFTFYHIRRLWVARIENRRWKRLTRELKKAFGQLQVRVLKEGDEEVNPNADSCVICFEAYKPNEIVRILTCKHFFHKNCIDPWILAHGTCPMCKCDILKALGIQMDIEDGTDSLQVLMSNELPGTLSPVEEETNYELPPARTSSKVTHVQEHPTSSANAGSQPPEAEETSHPSHGQQVL</sequence>
<name>RN133_MOUSE</name>
<dbReference type="EC" id="2.3.2.27" evidence="4"/>
<dbReference type="EMBL" id="AK028082">
    <property type="protein sequence ID" value="BAC25740.1"/>
    <property type="molecule type" value="mRNA"/>
</dbReference>
<dbReference type="EMBL" id="CH466533">
    <property type="protein sequence ID" value="EDL13834.1"/>
    <property type="molecule type" value="Genomic_DNA"/>
</dbReference>
<dbReference type="EMBL" id="BC116423">
    <property type="protein sequence ID" value="AAI16424.1"/>
    <property type="molecule type" value="mRNA"/>
</dbReference>
<dbReference type="EMBL" id="BC116424">
    <property type="protein sequence ID" value="AAI16425.1"/>
    <property type="molecule type" value="mRNA"/>
</dbReference>
<dbReference type="EMBL" id="AY155441">
    <property type="protein sequence ID" value="AAN75222.1"/>
    <property type="molecule type" value="mRNA"/>
</dbReference>
<dbReference type="CCDS" id="CCDS19938.1">
    <molecule id="Q14B02-2"/>
</dbReference>
<dbReference type="RefSeq" id="NP_001423063.1">
    <molecule id="Q14B02-1"/>
    <property type="nucleotide sequence ID" value="NM_001436134.1"/>
</dbReference>
<dbReference type="RefSeq" id="NP_937894.1">
    <molecule id="Q14B02-2"/>
    <property type="nucleotide sequence ID" value="NM_198251.3"/>
</dbReference>
<dbReference type="SMR" id="Q14B02"/>
<dbReference type="BioGRID" id="239748">
    <property type="interactions" value="1"/>
</dbReference>
<dbReference type="FunCoup" id="Q14B02">
    <property type="interactions" value="33"/>
</dbReference>
<dbReference type="STRING" id="10090.ENSMUSP00000066906"/>
<dbReference type="iPTMnet" id="Q14B02"/>
<dbReference type="PhosphoSitePlus" id="Q14B02"/>
<dbReference type="ProteomicsDB" id="300535">
    <molecule id="Q14B02-1"/>
</dbReference>
<dbReference type="ProteomicsDB" id="300536">
    <molecule id="Q14B02-2"/>
</dbReference>
<dbReference type="Antibodypedia" id="2716">
    <property type="antibodies" value="192 antibodies from 22 providers"/>
</dbReference>
<dbReference type="DNASU" id="386611"/>
<dbReference type="Ensembl" id="ENSMUST00000063548.4">
    <molecule id="Q14B02-2"/>
    <property type="protein sequence ID" value="ENSMUSP00000066906.4"/>
    <property type="gene ID" value="ENSMUSG00000051956.5"/>
</dbReference>
<dbReference type="Ensembl" id="ENSMUST00000115354.2">
    <molecule id="Q14B02-1"/>
    <property type="protein sequence ID" value="ENSMUSP00000111011.2"/>
    <property type="gene ID" value="ENSMUSG00000051956.5"/>
</dbReference>
<dbReference type="GeneID" id="386611"/>
<dbReference type="KEGG" id="mmu:386611"/>
<dbReference type="UCSC" id="uc009bbk.1">
    <molecule id="Q14B02-2"/>
    <property type="organism name" value="mouse"/>
</dbReference>
<dbReference type="UCSC" id="uc029vtq.1">
    <molecule id="Q14B02-1"/>
    <property type="organism name" value="mouse"/>
</dbReference>
<dbReference type="AGR" id="MGI:2677436"/>
<dbReference type="CTD" id="168433"/>
<dbReference type="MGI" id="MGI:2677436">
    <property type="gene designation" value="Rnf133"/>
</dbReference>
<dbReference type="VEuPathDB" id="HostDB:ENSMUSG00000051956"/>
<dbReference type="GeneTree" id="ENSGT00940000163928"/>
<dbReference type="HOGENOM" id="CLU_049885_1_2_1"/>
<dbReference type="InParanoid" id="Q14B02"/>
<dbReference type="OMA" id="YFIFYHI"/>
<dbReference type="OrthoDB" id="5357315at2759"/>
<dbReference type="PhylomeDB" id="Q14B02"/>
<dbReference type="TreeFam" id="TF317486"/>
<dbReference type="UniPathway" id="UPA00143"/>
<dbReference type="BioGRID-ORCS" id="386611">
    <property type="hits" value="2 hits in 60 CRISPR screens"/>
</dbReference>
<dbReference type="PRO" id="PR:Q14B02"/>
<dbReference type="Proteomes" id="UP000000589">
    <property type="component" value="Chromosome 6"/>
</dbReference>
<dbReference type="RNAct" id="Q14B02">
    <property type="molecule type" value="protein"/>
</dbReference>
<dbReference type="Bgee" id="ENSMUSG00000051956">
    <property type="expression patterns" value="Expressed in seminiferous tubule of testis and 4 other cell types or tissues"/>
</dbReference>
<dbReference type="GO" id="GO:0005789">
    <property type="term" value="C:endoplasmic reticulum membrane"/>
    <property type="evidence" value="ECO:0000314"/>
    <property type="project" value="UniProtKB"/>
</dbReference>
<dbReference type="GO" id="GO:0016740">
    <property type="term" value="F:transferase activity"/>
    <property type="evidence" value="ECO:0007669"/>
    <property type="project" value="UniProtKB-KW"/>
</dbReference>
<dbReference type="GO" id="GO:0008270">
    <property type="term" value="F:zinc ion binding"/>
    <property type="evidence" value="ECO:0007669"/>
    <property type="project" value="UniProtKB-KW"/>
</dbReference>
<dbReference type="GO" id="GO:0051865">
    <property type="term" value="P:protein autoubiquitination"/>
    <property type="evidence" value="ECO:0000314"/>
    <property type="project" value="UniProtKB"/>
</dbReference>
<dbReference type="CDD" id="cd02122">
    <property type="entry name" value="PA_GRAIL_like"/>
    <property type="match status" value="1"/>
</dbReference>
<dbReference type="CDD" id="cd16802">
    <property type="entry name" value="RING-H2_RNF128-like"/>
    <property type="match status" value="1"/>
</dbReference>
<dbReference type="FunFam" id="3.50.30.30:FF:000003">
    <property type="entry name" value="E3 ubiquitin-protein ligase RNF128"/>
    <property type="match status" value="1"/>
</dbReference>
<dbReference type="FunFam" id="3.30.40.10:FF:000009">
    <property type="entry name" value="E3 ubiquitin-protein ligase RNF130"/>
    <property type="match status" value="1"/>
</dbReference>
<dbReference type="Gene3D" id="3.50.30.30">
    <property type="match status" value="1"/>
</dbReference>
<dbReference type="Gene3D" id="3.30.40.10">
    <property type="entry name" value="Zinc/RING finger domain, C3HC4 (zinc finger)"/>
    <property type="match status" value="1"/>
</dbReference>
<dbReference type="InterPro" id="IPR046450">
    <property type="entry name" value="PA_dom_sf"/>
</dbReference>
<dbReference type="InterPro" id="IPR003137">
    <property type="entry name" value="PA_domain"/>
</dbReference>
<dbReference type="InterPro" id="IPR001841">
    <property type="entry name" value="Znf_RING"/>
</dbReference>
<dbReference type="InterPro" id="IPR013083">
    <property type="entry name" value="Znf_RING/FYVE/PHD"/>
</dbReference>
<dbReference type="PANTHER" id="PTHR46539">
    <property type="entry name" value="E3 UBIQUITIN-PROTEIN LIGASE ATL42"/>
    <property type="match status" value="1"/>
</dbReference>
<dbReference type="PANTHER" id="PTHR46539:SF27">
    <property type="entry name" value="RING FINGER PROTEIN 128"/>
    <property type="match status" value="1"/>
</dbReference>
<dbReference type="Pfam" id="PF02225">
    <property type="entry name" value="PA"/>
    <property type="match status" value="1"/>
</dbReference>
<dbReference type="Pfam" id="PF13639">
    <property type="entry name" value="zf-RING_2"/>
    <property type="match status" value="1"/>
</dbReference>
<dbReference type="SMART" id="SM00184">
    <property type="entry name" value="RING"/>
    <property type="match status" value="1"/>
</dbReference>
<dbReference type="SUPFAM" id="SSF52025">
    <property type="entry name" value="PA domain"/>
    <property type="match status" value="1"/>
</dbReference>
<dbReference type="SUPFAM" id="SSF57850">
    <property type="entry name" value="RING/U-box"/>
    <property type="match status" value="1"/>
</dbReference>
<dbReference type="PROSITE" id="PS50089">
    <property type="entry name" value="ZF_RING_2"/>
    <property type="match status" value="1"/>
</dbReference>
<organism>
    <name type="scientific">Mus musculus</name>
    <name type="common">Mouse</name>
    <dbReference type="NCBI Taxonomy" id="10090"/>
    <lineage>
        <taxon>Eukaryota</taxon>
        <taxon>Metazoa</taxon>
        <taxon>Chordata</taxon>
        <taxon>Craniata</taxon>
        <taxon>Vertebrata</taxon>
        <taxon>Euteleostomi</taxon>
        <taxon>Mammalia</taxon>
        <taxon>Eutheria</taxon>
        <taxon>Euarchontoglires</taxon>
        <taxon>Glires</taxon>
        <taxon>Rodentia</taxon>
        <taxon>Myomorpha</taxon>
        <taxon>Muroidea</taxon>
        <taxon>Muridae</taxon>
        <taxon>Murinae</taxon>
        <taxon>Mus</taxon>
        <taxon>Mus</taxon>
    </lineage>
</organism>
<reference key="1">
    <citation type="journal article" date="2005" name="Science">
        <title>The transcriptional landscape of the mammalian genome.</title>
        <authorList>
            <person name="Carninci P."/>
            <person name="Kasukawa T."/>
            <person name="Katayama S."/>
            <person name="Gough J."/>
            <person name="Frith M.C."/>
            <person name="Maeda N."/>
            <person name="Oyama R."/>
            <person name="Ravasi T."/>
            <person name="Lenhard B."/>
            <person name="Wells C."/>
            <person name="Kodzius R."/>
            <person name="Shimokawa K."/>
            <person name="Bajic V.B."/>
            <person name="Brenner S.E."/>
            <person name="Batalov S."/>
            <person name="Forrest A.R."/>
            <person name="Zavolan M."/>
            <person name="Davis M.J."/>
            <person name="Wilming L.G."/>
            <person name="Aidinis V."/>
            <person name="Allen J.E."/>
            <person name="Ambesi-Impiombato A."/>
            <person name="Apweiler R."/>
            <person name="Aturaliya R.N."/>
            <person name="Bailey T.L."/>
            <person name="Bansal M."/>
            <person name="Baxter L."/>
            <person name="Beisel K.W."/>
            <person name="Bersano T."/>
            <person name="Bono H."/>
            <person name="Chalk A.M."/>
            <person name="Chiu K.P."/>
            <person name="Choudhary V."/>
            <person name="Christoffels A."/>
            <person name="Clutterbuck D.R."/>
            <person name="Crowe M.L."/>
            <person name="Dalla E."/>
            <person name="Dalrymple B.P."/>
            <person name="de Bono B."/>
            <person name="Della Gatta G."/>
            <person name="di Bernardo D."/>
            <person name="Down T."/>
            <person name="Engstrom P."/>
            <person name="Fagiolini M."/>
            <person name="Faulkner G."/>
            <person name="Fletcher C.F."/>
            <person name="Fukushima T."/>
            <person name="Furuno M."/>
            <person name="Futaki S."/>
            <person name="Gariboldi M."/>
            <person name="Georgii-Hemming P."/>
            <person name="Gingeras T.R."/>
            <person name="Gojobori T."/>
            <person name="Green R.E."/>
            <person name="Gustincich S."/>
            <person name="Harbers M."/>
            <person name="Hayashi Y."/>
            <person name="Hensch T.K."/>
            <person name="Hirokawa N."/>
            <person name="Hill D."/>
            <person name="Huminiecki L."/>
            <person name="Iacono M."/>
            <person name="Ikeo K."/>
            <person name="Iwama A."/>
            <person name="Ishikawa T."/>
            <person name="Jakt M."/>
            <person name="Kanapin A."/>
            <person name="Katoh M."/>
            <person name="Kawasawa Y."/>
            <person name="Kelso J."/>
            <person name="Kitamura H."/>
            <person name="Kitano H."/>
            <person name="Kollias G."/>
            <person name="Krishnan S.P."/>
            <person name="Kruger A."/>
            <person name="Kummerfeld S.K."/>
            <person name="Kurochkin I.V."/>
            <person name="Lareau L.F."/>
            <person name="Lazarevic D."/>
            <person name="Lipovich L."/>
            <person name="Liu J."/>
            <person name="Liuni S."/>
            <person name="McWilliam S."/>
            <person name="Madan Babu M."/>
            <person name="Madera M."/>
            <person name="Marchionni L."/>
            <person name="Matsuda H."/>
            <person name="Matsuzawa S."/>
            <person name="Miki H."/>
            <person name="Mignone F."/>
            <person name="Miyake S."/>
            <person name="Morris K."/>
            <person name="Mottagui-Tabar S."/>
            <person name="Mulder N."/>
            <person name="Nakano N."/>
            <person name="Nakauchi H."/>
            <person name="Ng P."/>
            <person name="Nilsson R."/>
            <person name="Nishiguchi S."/>
            <person name="Nishikawa S."/>
            <person name="Nori F."/>
            <person name="Ohara O."/>
            <person name="Okazaki Y."/>
            <person name="Orlando V."/>
            <person name="Pang K.C."/>
            <person name="Pavan W.J."/>
            <person name="Pavesi G."/>
            <person name="Pesole G."/>
            <person name="Petrovsky N."/>
            <person name="Piazza S."/>
            <person name="Reed J."/>
            <person name="Reid J.F."/>
            <person name="Ring B.Z."/>
            <person name="Ringwald M."/>
            <person name="Rost B."/>
            <person name="Ruan Y."/>
            <person name="Salzberg S.L."/>
            <person name="Sandelin A."/>
            <person name="Schneider C."/>
            <person name="Schoenbach C."/>
            <person name="Sekiguchi K."/>
            <person name="Semple C.A."/>
            <person name="Seno S."/>
            <person name="Sessa L."/>
            <person name="Sheng Y."/>
            <person name="Shibata Y."/>
            <person name="Shimada H."/>
            <person name="Shimada K."/>
            <person name="Silva D."/>
            <person name="Sinclair B."/>
            <person name="Sperling S."/>
            <person name="Stupka E."/>
            <person name="Sugiura K."/>
            <person name="Sultana R."/>
            <person name="Takenaka Y."/>
            <person name="Taki K."/>
            <person name="Tammoja K."/>
            <person name="Tan S.L."/>
            <person name="Tang S."/>
            <person name="Taylor M.S."/>
            <person name="Tegner J."/>
            <person name="Teichmann S.A."/>
            <person name="Ueda H.R."/>
            <person name="van Nimwegen E."/>
            <person name="Verardo R."/>
            <person name="Wei C.L."/>
            <person name="Yagi K."/>
            <person name="Yamanishi H."/>
            <person name="Zabarovsky E."/>
            <person name="Zhu S."/>
            <person name="Zimmer A."/>
            <person name="Hide W."/>
            <person name="Bult C."/>
            <person name="Grimmond S.M."/>
            <person name="Teasdale R.D."/>
            <person name="Liu E.T."/>
            <person name="Brusic V."/>
            <person name="Quackenbush J."/>
            <person name="Wahlestedt C."/>
            <person name="Mattick J.S."/>
            <person name="Hume D.A."/>
            <person name="Kai C."/>
            <person name="Sasaki D."/>
            <person name="Tomaru Y."/>
            <person name="Fukuda S."/>
            <person name="Kanamori-Katayama M."/>
            <person name="Suzuki M."/>
            <person name="Aoki J."/>
            <person name="Arakawa T."/>
            <person name="Iida J."/>
            <person name="Imamura K."/>
            <person name="Itoh M."/>
            <person name="Kato T."/>
            <person name="Kawaji H."/>
            <person name="Kawagashira N."/>
            <person name="Kawashima T."/>
            <person name="Kojima M."/>
            <person name="Kondo S."/>
            <person name="Konno H."/>
            <person name="Nakano K."/>
            <person name="Ninomiya N."/>
            <person name="Nishio T."/>
            <person name="Okada M."/>
            <person name="Plessy C."/>
            <person name="Shibata K."/>
            <person name="Shiraki T."/>
            <person name="Suzuki S."/>
            <person name="Tagami M."/>
            <person name="Waki K."/>
            <person name="Watahiki A."/>
            <person name="Okamura-Oho Y."/>
            <person name="Suzuki H."/>
            <person name="Kawai J."/>
            <person name="Hayashizaki Y."/>
        </authorList>
    </citation>
    <scope>NUCLEOTIDE SEQUENCE [LARGE SCALE MRNA] (ISOFORM 2)</scope>
    <source>
        <strain>C57BL/6J</strain>
        <tissue>Testis</tissue>
    </source>
</reference>
<reference key="2">
    <citation type="submission" date="2005-09" db="EMBL/GenBank/DDBJ databases">
        <authorList>
            <person name="Mural R.J."/>
            <person name="Adams M.D."/>
            <person name="Myers E.W."/>
            <person name="Smith H.O."/>
            <person name="Venter J.C."/>
        </authorList>
    </citation>
    <scope>NUCLEOTIDE SEQUENCE [LARGE SCALE GENOMIC DNA]</scope>
</reference>
<reference key="3">
    <citation type="journal article" date="2004" name="Genome Res.">
        <title>The status, quality, and expansion of the NIH full-length cDNA project: the Mammalian Gene Collection (MGC).</title>
        <authorList>
            <consortium name="The MGC Project Team"/>
        </authorList>
    </citation>
    <scope>NUCLEOTIDE SEQUENCE [LARGE SCALE MRNA] (ISOFORM 1)</scope>
</reference>
<reference key="4">
    <citation type="journal article" date="2002" name="Dev. Biol.">
        <title>The E3 ubiquitin ligase GREUL1 anteriorizes ectoderm during Xenopus development.</title>
        <authorList>
            <person name="Borchers A.G.M."/>
            <person name="Hufton A.L."/>
            <person name="Eldridge A.G."/>
            <person name="Jackson P.K."/>
            <person name="Harland R.M."/>
            <person name="Baker J.C."/>
        </authorList>
    </citation>
    <scope>NUCLEOTIDE SEQUENCE [MRNA] OF 42-381 (ISOFORM 1)</scope>
    <source>
        <strain>CD-1</strain>
    </source>
</reference>
<reference key="5">
    <citation type="journal article" date="2008" name="Cell Res.">
        <title>Mouse RING finger protein Rnf133 is a testis-specific endoplasmic reticulum-associated E3 ubiquitin ligase.</title>
        <authorList>
            <person name="Nian H."/>
            <person name="Zhang W."/>
            <person name="Shi H."/>
            <person name="Zhao Q."/>
            <person name="Xie Q."/>
            <person name="Liao S."/>
            <person name="Zhang Y."/>
            <person name="Zhang Z."/>
            <person name="Wang C."/>
            <person name="Han C."/>
        </authorList>
    </citation>
    <scope>FUNCTION</scope>
    <scope>SUBCELLULAR LOCATION</scope>
    <scope>AUTOUBIQUITINATION</scope>
    <scope>TISSUE SPECIFICITY</scope>
    <scope>DEVELOPMENTAL STAGE</scope>
    <scope>CATALYTIC ACTIVITY</scope>
</reference>
<reference key="6">
    <citation type="journal article" date="2022" name="BMC Biol.">
        <title>The testis-specific E3 ubiquitin ligase RNF133 is required for fecundity in mice.</title>
        <authorList>
            <person name="Nozawa K."/>
            <person name="Fujihara Y."/>
            <person name="Devlin D.J."/>
            <person name="Deras R.E."/>
            <person name="Kent K."/>
            <person name="Larina I.V."/>
            <person name="Umezu K."/>
            <person name="Yu Z."/>
            <person name="Sutton C.M."/>
            <person name="Ye Q."/>
            <person name="Dean L.K."/>
            <person name="Emori C."/>
            <person name="Ikawa M."/>
            <person name="Garcia T.X."/>
            <person name="Matzuk M.M."/>
        </authorList>
    </citation>
    <scope>FUNCTION</scope>
    <scope>DISRUPTION PHENOTYPE</scope>
    <scope>TISSUE SPECIFICITY</scope>
    <scope>DEVELOPMENTAL STAGE</scope>
    <scope>INTERACTION WITH UBE2J1</scope>
    <scope>SUBCELLULAR LOCATION</scope>
</reference>
<keyword id="KW-0025">Alternative splicing</keyword>
<keyword id="KW-0256">Endoplasmic reticulum</keyword>
<keyword id="KW-0472">Membrane</keyword>
<keyword id="KW-0479">Metal-binding</keyword>
<keyword id="KW-1185">Reference proteome</keyword>
<keyword id="KW-0808">Transferase</keyword>
<keyword id="KW-0812">Transmembrane</keyword>
<keyword id="KW-1133">Transmembrane helix</keyword>
<keyword id="KW-0832">Ubl conjugation</keyword>
<keyword id="KW-0833">Ubl conjugation pathway</keyword>
<keyword id="KW-0862">Zinc</keyword>
<keyword id="KW-0863">Zinc-finger</keyword>
<proteinExistence type="evidence at protein level"/>